<gene>
    <name type="primary">NTVIIIrgp1</name>
</gene>
<protein>
    <recommendedName>
        <fullName>Neurotoxin 8-related gene product 1/2/3</fullName>
    </recommendedName>
    <alternativeName>
        <fullName>Amm VIIIrgp1</fullName>
    </alternativeName>
    <alternativeName>
        <fullName>Amm VIIIrgp2</fullName>
    </alternativeName>
    <alternativeName>
        <fullName>Amm VIIIrgp3</fullName>
    </alternativeName>
</protein>
<keyword id="KW-0027">Amidation</keyword>
<keyword id="KW-1015">Disulfide bond</keyword>
<keyword id="KW-0872">Ion channel impairing toxin</keyword>
<keyword id="KW-0528">Neurotoxin</keyword>
<keyword id="KW-0964">Secreted</keyword>
<keyword id="KW-0732">Signal</keyword>
<keyword id="KW-0800">Toxin</keyword>
<keyword id="KW-0738">Voltage-gated sodium channel impairing toxin</keyword>
<evidence type="ECO:0000250" key="1"/>
<evidence type="ECO:0000255" key="2">
    <source>
        <dbReference type="PROSITE-ProRule" id="PRU01210"/>
    </source>
</evidence>
<evidence type="ECO:0000305" key="3"/>
<evidence type="ECO:0000305" key="4">
    <source>
    </source>
</evidence>
<feature type="signal peptide" evidence="1">
    <location>
        <begin position="1"/>
        <end position="19"/>
    </location>
</feature>
<feature type="chain" id="PRO_0000257745" description="Neurotoxin 8-related gene product 1/2/3">
    <location>
        <begin position="20"/>
        <end position="84"/>
    </location>
</feature>
<feature type="domain" description="LCN-type CS-alpha/beta" evidence="2">
    <location>
        <begin position="22"/>
        <end position="84"/>
    </location>
</feature>
<feature type="modified residue" description="Asparagine amide" evidence="4">
    <location>
        <position position="84"/>
    </location>
</feature>
<feature type="disulfide bond" evidence="2">
    <location>
        <begin position="32"/>
        <end position="83"/>
    </location>
</feature>
<feature type="disulfide bond" evidence="2">
    <location>
        <begin position="36"/>
        <end position="56"/>
    </location>
</feature>
<feature type="disulfide bond" evidence="2">
    <location>
        <begin position="42"/>
        <end position="66"/>
    </location>
</feature>
<feature type="disulfide bond" evidence="2">
    <location>
        <begin position="46"/>
        <end position="68"/>
    </location>
</feature>
<feature type="sequence conflict" description="In Ref. 1." evidence="3" ref="1">
    <original>R</original>
    <variation>K</variation>
    <location>
        <position position="38"/>
    </location>
</feature>
<feature type="sequence conflict" description="In Ref. 1." evidence="3" ref="1">
    <original>I</original>
    <variation>V</variation>
    <location>
        <position position="57"/>
    </location>
</feature>
<feature type="sequence conflict" description="In Ref. 1." evidence="3" ref="1">
    <original>E</original>
    <variation>K</variation>
    <location>
        <position position="61"/>
    </location>
</feature>
<comment type="function">
    <text evidence="1">Binds voltage-dependently at site-3 of sodium channels (Nav) and inhibits the inactivation of the activated channels, thereby blocking neuronal transmission.</text>
</comment>
<comment type="subcellular location">
    <subcellularLocation>
        <location>Secreted</location>
    </subcellularLocation>
</comment>
<comment type="tissue specificity">
    <text>Expressed by the venom gland.</text>
</comment>
<comment type="domain">
    <text evidence="3">Has the structural arrangement of an alpha-helix connected to antiparallel beta-sheets by disulfide bonds (CS-alpha/beta).</text>
</comment>
<comment type="similarity">
    <text evidence="3">Belongs to the long (4 C-C) scorpion toxin superfamily. Sodium channel inhibitor family. Alpha subfamily.</text>
</comment>
<name>SCX8R_ANDMA</name>
<accession>Q2YHM1</accession>
<reference key="1">
    <citation type="journal article" date="2006" name="Toxicon">
        <title>Genomic characterisation of the toxin Amm VIII from the scorpion Androctonus mauretanicus mauretanicus.</title>
        <authorList>
            <person name="Alami M."/>
            <person name="Ceard B."/>
            <person name="Legros C."/>
            <person name="Bougis P.E."/>
            <person name="Martin-Eauclaire M.-F."/>
        </authorList>
    </citation>
    <scope>NUCLEOTIDE SEQUENCE [GENOMIC DNA]</scope>
    <scope>AMIDATION AT ASN-84</scope>
    <source>
        <tissue>Muscle</tissue>
    </source>
</reference>
<proteinExistence type="inferred from homology"/>
<sequence length="86" mass="9598">MNYLTMISLALLVMTGVESGVRDAYIADNKNCIFTCYRDSYCKTECIKNGAETGYCIWIGEYGNACWCIKLPNKVPIKVPGKCNGR</sequence>
<organism>
    <name type="scientific">Androctonus mauritanicus mauritanicus</name>
    <name type="common">Scorpion</name>
    <dbReference type="NCBI Taxonomy" id="6860"/>
    <lineage>
        <taxon>Eukaryota</taxon>
        <taxon>Metazoa</taxon>
        <taxon>Ecdysozoa</taxon>
        <taxon>Arthropoda</taxon>
        <taxon>Chelicerata</taxon>
        <taxon>Arachnida</taxon>
        <taxon>Scorpiones</taxon>
        <taxon>Buthida</taxon>
        <taxon>Buthoidea</taxon>
        <taxon>Buthidae</taxon>
        <taxon>Androctonus</taxon>
    </lineage>
</organism>
<dbReference type="EMBL" id="AM159182">
    <property type="protein sequence ID" value="CAJ43745.1"/>
    <property type="molecule type" value="Genomic_DNA"/>
</dbReference>
<dbReference type="SMR" id="Q2YHM1"/>
<dbReference type="GO" id="GO:0005576">
    <property type="term" value="C:extracellular region"/>
    <property type="evidence" value="ECO:0007669"/>
    <property type="project" value="UniProtKB-SubCell"/>
</dbReference>
<dbReference type="GO" id="GO:0019871">
    <property type="term" value="F:sodium channel inhibitor activity"/>
    <property type="evidence" value="ECO:0007669"/>
    <property type="project" value="InterPro"/>
</dbReference>
<dbReference type="GO" id="GO:0090729">
    <property type="term" value="F:toxin activity"/>
    <property type="evidence" value="ECO:0007669"/>
    <property type="project" value="UniProtKB-KW"/>
</dbReference>
<dbReference type="GO" id="GO:0006952">
    <property type="term" value="P:defense response"/>
    <property type="evidence" value="ECO:0007669"/>
    <property type="project" value="InterPro"/>
</dbReference>
<dbReference type="CDD" id="cd23106">
    <property type="entry name" value="neurotoxins_LC_scorpion"/>
    <property type="match status" value="1"/>
</dbReference>
<dbReference type="Gene3D" id="3.30.30.10">
    <property type="entry name" value="Knottin, scorpion toxin-like"/>
    <property type="match status" value="1"/>
</dbReference>
<dbReference type="InterPro" id="IPR044062">
    <property type="entry name" value="LCN-type_CS_alpha_beta_dom"/>
</dbReference>
<dbReference type="InterPro" id="IPR003614">
    <property type="entry name" value="Scorpion_toxin-like"/>
</dbReference>
<dbReference type="InterPro" id="IPR036574">
    <property type="entry name" value="Scorpion_toxin-like_sf"/>
</dbReference>
<dbReference type="InterPro" id="IPR018218">
    <property type="entry name" value="Scorpion_toxinL"/>
</dbReference>
<dbReference type="InterPro" id="IPR002061">
    <property type="entry name" value="Scorpion_toxinL/defensin"/>
</dbReference>
<dbReference type="Pfam" id="PF00537">
    <property type="entry name" value="Toxin_3"/>
    <property type="match status" value="1"/>
</dbReference>
<dbReference type="PRINTS" id="PR00285">
    <property type="entry name" value="SCORPNTOXIN"/>
</dbReference>
<dbReference type="SMART" id="SM00505">
    <property type="entry name" value="Knot1"/>
    <property type="match status" value="1"/>
</dbReference>
<dbReference type="SUPFAM" id="SSF57095">
    <property type="entry name" value="Scorpion toxin-like"/>
    <property type="match status" value="1"/>
</dbReference>
<dbReference type="PROSITE" id="PS51863">
    <property type="entry name" value="LCN_CSAB"/>
    <property type="match status" value="1"/>
</dbReference>